<feature type="chain" id="PRO_0000308397" description="Polyprotein P1234">
    <location>
        <begin position="1"/>
        <end position="2514"/>
    </location>
</feature>
<feature type="chain" id="PRO_0000229030" description="Polyprotein P123" evidence="1">
    <location>
        <begin position="1"/>
        <end position="1903"/>
    </location>
</feature>
<feature type="chain" id="PRO_0000041214" description="mRNA-capping enzyme nsP1" evidence="1">
    <location>
        <begin position="1"/>
        <end position="535"/>
    </location>
</feature>
<feature type="chain" id="PRO_0000041215" description="Protease nsP2" evidence="1">
    <location>
        <begin position="536"/>
        <end position="1333"/>
    </location>
</feature>
<feature type="chain" id="PRO_0000041216" description="Non-structural protein 3" evidence="1">
    <location>
        <begin position="1334"/>
        <end position="1903"/>
    </location>
</feature>
<feature type="chain" id="PRO_0000041217" description="RNA-directed RNA polymerase nsP4" evidence="1">
    <location>
        <begin position="1904"/>
        <end position="2514"/>
    </location>
</feature>
<feature type="domain" description="Alphavirus-like MT" evidence="11">
    <location>
        <begin position="28"/>
        <end position="259"/>
    </location>
</feature>
<feature type="domain" description="(+)RNA virus helicase ATP-binding" evidence="10">
    <location>
        <begin position="690"/>
        <end position="842"/>
    </location>
</feature>
<feature type="domain" description="(+)RNA virus helicase C-terminal" evidence="10">
    <location>
        <begin position="843"/>
        <end position="991"/>
    </location>
</feature>
<feature type="domain" description="Peptidase C9" evidence="9">
    <location>
        <begin position="1004"/>
        <end position="1327"/>
    </location>
</feature>
<feature type="domain" description="Macro" evidence="7">
    <location>
        <begin position="1334"/>
        <end position="1493"/>
    </location>
</feature>
<feature type="domain" description="RdRp catalytic" evidence="8">
    <location>
        <begin position="2268"/>
        <end position="2383"/>
    </location>
</feature>
<feature type="region of interest" description="NsP1 membrane-binding" evidence="3">
    <location>
        <begin position="244"/>
        <end position="263"/>
    </location>
</feature>
<feature type="region of interest" description="Nucleolus localization signal" evidence="3">
    <location>
        <begin position="1005"/>
        <end position="1024"/>
    </location>
</feature>
<feature type="short sequence motif" description="Nuclear export signal" evidence="4">
    <location>
        <begin position="1058"/>
        <end position="1067"/>
    </location>
</feature>
<feature type="short sequence motif" description="Nuclear localization signal" evidence="3">
    <location>
        <begin position="1182"/>
        <end position="1186"/>
    </location>
</feature>
<feature type="short sequence motif" description="FGDF; binding to host G3BP1" evidence="3">
    <location>
        <begin position="1852"/>
        <end position="1855"/>
    </location>
</feature>
<feature type="short sequence motif" description="FGDF; binding to host G3BP1" evidence="3">
    <location>
        <begin position="1870"/>
        <end position="1873"/>
    </location>
</feature>
<feature type="active site" description="For cysteine protease nsP2 activity" evidence="9">
    <location>
        <position position="1013"/>
    </location>
</feature>
<feature type="active site" description="For cysteine protease nsP2 activity" evidence="9">
    <location>
        <position position="1083"/>
    </location>
</feature>
<feature type="binding site" evidence="10">
    <location>
        <begin position="721"/>
        <end position="728"/>
    </location>
    <ligand>
        <name>a ribonucleoside 5'-triphosphate</name>
        <dbReference type="ChEBI" id="CHEBI:61557"/>
    </ligand>
</feature>
<feature type="binding site" evidence="5">
    <location>
        <position position="1343"/>
    </location>
    <ligand>
        <name>ADP-D-ribose</name>
        <dbReference type="ChEBI" id="CHEBI:57967"/>
    </ligand>
</feature>
<feature type="binding site" evidence="6">
    <location>
        <position position="1357"/>
    </location>
    <ligand>
        <name>ADP-D-ribose</name>
        <dbReference type="ChEBI" id="CHEBI:57967"/>
    </ligand>
</feature>
<feature type="binding site" evidence="6">
    <location>
        <position position="1365"/>
    </location>
    <ligand>
        <name>ADP-D-ribose</name>
        <dbReference type="ChEBI" id="CHEBI:57967"/>
    </ligand>
</feature>
<feature type="binding site" evidence="5">
    <location>
        <position position="1445"/>
    </location>
    <ligand>
        <name>ADP-D-ribose</name>
        <dbReference type="ChEBI" id="CHEBI:57967"/>
    </ligand>
</feature>
<feature type="binding site" evidence="6">
    <location>
        <position position="1446"/>
    </location>
    <ligand>
        <name>ADP-D-ribose</name>
        <dbReference type="ChEBI" id="CHEBI:57967"/>
    </ligand>
</feature>
<feature type="binding site" evidence="6">
    <location>
        <position position="1447"/>
    </location>
    <ligand>
        <name>ADP-D-ribose</name>
        <dbReference type="ChEBI" id="CHEBI:57967"/>
    </ligand>
</feature>
<feature type="binding site" evidence="2">
    <location>
        <position position="1595"/>
    </location>
    <ligand>
        <name>Zn(2+)</name>
        <dbReference type="ChEBI" id="CHEBI:29105"/>
    </ligand>
</feature>
<feature type="binding site" evidence="2">
    <location>
        <position position="1597"/>
    </location>
    <ligand>
        <name>Zn(2+)</name>
        <dbReference type="ChEBI" id="CHEBI:29105"/>
    </ligand>
</feature>
<feature type="binding site" evidence="2">
    <location>
        <position position="1620"/>
    </location>
    <ligand>
        <name>Zn(2+)</name>
        <dbReference type="ChEBI" id="CHEBI:29105"/>
    </ligand>
</feature>
<feature type="binding site" evidence="2">
    <location>
        <position position="1638"/>
    </location>
    <ligand>
        <name>Zn(2+)</name>
        <dbReference type="ChEBI" id="CHEBI:29105"/>
    </ligand>
</feature>
<feature type="site" description="Involved in the phosphoramide link with 7-methyl-GMP" evidence="4">
    <location>
        <position position="37"/>
    </location>
</feature>
<feature type="site" description="Cleavage; by protease nsP2" evidence="2">
    <location>
        <begin position="535"/>
        <end position="536"/>
    </location>
</feature>
<feature type="site" description="Cleavage; by protease nsP2" evidence="2">
    <location>
        <begin position="1333"/>
        <end position="1334"/>
    </location>
</feature>
<feature type="site" description="Cleavage; by protease nsP2" evidence="1">
    <location>
        <begin position="1903"/>
        <end position="1904"/>
    </location>
</feature>
<feature type="lipid moiety-binding region" description="S-palmitoyl cysteine; by host" evidence="6">
    <location>
        <position position="417"/>
    </location>
</feature>
<feature type="lipid moiety-binding region" description="S-palmitoyl cysteine; by host" evidence="6">
    <location>
        <position position="419"/>
    </location>
</feature>
<sequence>MDSVYVDIDADSAFLKALQQAYPMFEVEPKQVTPNDHANARAFSHLAIKLIEQEIDPDSTILDIGSAPARRMMSDRKYHCVCPMRSAEDPERLANYARKLASAAGKVTDKNISGKINDLQAVMAVPNMETSTFCLHTDATCKQRGDVAIYQDVYAVHAPTSLYHQAIKGVRVAYWIGFDTTPFMYNAMAGAYPSYSTNWADEQVLKAKNIGLCSTDLSEGRRGKLSIMRGKKLKPCDRVLFSVGSTLYPESRKLLQSWHLPSVFHLKGKLSFTCRCDTIVSCEGYVVKRVTMSPGIYGKTSGYAVTHHAGGFLMCKTTDTVDGERVSFSVCTYVPATICDQMTGILATEVTPEDAQKLLVGLNQRIVVNGRTQRNTNTMKNYLLPIVAQAFSKWAKECRKDMEDEKLLGVRERTLTCCCLWAFRKHKTHTVYKRPDTQSIQKVPAEFDSFVIPSLWSSGLSIPLRTRIKWLLSKAPKYEQLPHSGNAEEAAQAETDAVEEQEAELTREAMPPLQATQDDIQVEIDVEQLEDRAGAGIVETPRGAIKVTAQPSDLVVGEYLVLTPQAVLRSQKLSLIHALAEQVKTCTHSGRAGRYAVEAYDGRVLVPSGYAIPQEDFQSLSESATMVFNEREFVNRKLHHIAMHGPALNTDEESYELVRVEKTEHEYVYDVDQKKCCKREEATGLVLVGDLTSPPYHEFAYEGLKIRPACPYKTAVIGVFGVPGSGKSAIIKNLVTRQDLVTSGKKENCQEISNDVMRQRKLEISARTVDSLLLNGCNKPVEVLYVDEAFACHSGTLLALIAMVRPRQKVVLCGDPKQCGFFNMMQMKVNYNHNICTQVYHKSISRRCTLPVTAIVSSLHYESKMRTTNEYNQPIVVDTTGITKPEPGDLVLTCFRGWVKQLQIDYRGNEVMTAAASQGLTRKGVYAVRQKVNENPLYAPTSEHVNVLLTRTEGKLTWKTLSGDPWIKILQNPPKGDFKATIKEWEAEHASIMAGICNHQMAFDTFQNKANVCWAKCLVPILDTAGIKLSDRQWSQIVQAFKEDRAYSPEVALNEICTRIYGVDLDSGLFSKPLISVYYADNHWDNRPGGKMFGFNPEVALMLEKKYPFTKGKWNINKQICITTRKVDEFNPETNIIPANRRLPHSLVAEHHSVRGERMEWLVNKISGHHMLLVSGHNLILPTKRVTWVAPLGTRGADYTYNLELGLPATLGRYDLVVINIHTPFRIHHYQQCVDHAMKLQMLGGDSLRLLKPGGSLLIRAYGYADRTSERVISVLGRKFRSSRALKPQCITSNTEMFFLFSRFDNGRRNFTTHVMNNQLNAVYAGLATRAGCAPSYRVKRMDIAKNTEECVVNAANPRGVPGDGVCKAVYRKWPESFRNSATPVGTAKTIMCGQYPVIHAVGPNFSNYSEAEGDRELASVYREVAKEVSRLGVSSVAIPLLSTGVYSGGKDRLLQSLNHLFAAMDSTDADVVIYCRDKEWEKKITEAISLRSQVELLDDHISVDCDIVRVHPDSSLAGRKGYSTVEGALYSYLEGTRFHQTAVDMAEIYTMWPKQTEANEQVCLYALGESIESVRQKCPVDDADASFPPKTVPCLCRYAMTPERVARLRMNHTTSIIVCSSFPLPKYKIEGVQKVKCSKALLFDHNVPSRVSPRTYRPADEIIQTPQTPTEACQDAQLVQSINDEAVPVPSDLEACDATMDWPSIGTVSTRQRHDSSDSEYSGSRSNIQLVTADVHAPMYAHSLASSGGSMLSLSSEPAQNGTMILLDSEDTDSISRVSTPIAPPRRRLGRTINVTCDEREGKILPMASDRFFTAKPYTVALSVSTADMTVYPIQAPLGLIPPPTLEPITFGDFAEGEIDNLLTGALTFGDFEPGEVEELTDSEWSTCSDTDEELRLDRAGGYIFSSDTGQGHLQQKSVRQTTLPVNIVEEVHEEKCYPPKLDEIKEQLLLKRLQESASTANRSRYQSRKVENMKATIIHRLKEGCRLYLASETPRVPSYRVTYPAPIYSPSINIKLTNPETAVAVCNEFLARNYPTVASYQVTDEYDAYLDMVDGSESCLDRATFNPSKLRSYPKQHSYHAPTIRSAVPSPFQNTLQNVLAAATKRNCNVTQMRELPTMDSAVFNVECFKKYACNQEYWREFASSPIRVTTENLTMYVTKLKGPKAAALFAKTHNLLPLQEVPMDRFTMDMKRDVKVTPGTKHTEERPKVQVIQAAEPLATAYLCGIHRELVRRLNAVLLPNVHTLFDMSAEDFDAIIATHFKPGDAVLETDIASFDKSQDDSLASTAMMLLEDLGVDQPILDLIEAAFGEISSCHLPTGTRFKFGAMMKSGMFLTLFVNTLLNITIASRVLEERLTTSACAAFIGDDNIIHGVVSDALMAARCATWMNMEVKIIDAVVSEKAPYFCGGFILHDTVTGTSCRVADPLKRLFKLGKPLAAGDEQDEDRRRALADEVTRWQRTGLVTELEKAVYSRYEVQGITAVITSMATFANSKENFKKLRGPVVTLYGGPK</sequence>
<protein>
    <recommendedName>
        <fullName>Polyprotein P1234</fullName>
        <shortName>P1234</shortName>
    </recommendedName>
    <alternativeName>
        <fullName>Non-structural polyprotein</fullName>
    </alternativeName>
    <component>
        <recommendedName>
            <fullName>Polyprotein P123</fullName>
            <shortName>P123</shortName>
        </recommendedName>
    </component>
    <component>
        <recommendedName>
            <fullName>mRNA-capping enzyme nsP1</fullName>
            <ecNumber evidence="4">2.1.1.-</ecNumber>
            <ecNumber evidence="4">2.7.7.-</ecNumber>
        </recommendedName>
        <alternativeName>
            <fullName>Non-structural protein 1</fullName>
        </alternativeName>
    </component>
    <component>
        <recommendedName>
            <fullName>Protease nsP2</fullName>
            <ecNumber evidence="6">3.4.22.-</ecNumber>
            <ecNumber evidence="6">3.6.1.15</ecNumber>
            <ecNumber evidence="3">3.6.1.74</ecNumber>
            <ecNumber evidence="6">3.6.4.13</ecNumber>
        </recommendedName>
        <alternativeName>
            <fullName>Non-structural protein 2</fullName>
            <shortName>nsP2</shortName>
        </alternativeName>
    </component>
    <component>
        <recommendedName>
            <fullName>Non-structural protein 3</fullName>
            <shortName>nsP3</shortName>
            <ecNumber evidence="6">3.1.3.84</ecNumber>
        </recommendedName>
    </component>
    <component>
        <recommendedName>
            <fullName>RNA-directed RNA polymerase nsP4</fullName>
            <ecNumber evidence="2">2.7.7.19</ecNumber>
            <ecNumber evidence="8">2.7.7.48</ecNumber>
        </recommendedName>
        <alternativeName>
            <fullName>Non-structural protein 4</fullName>
            <shortName>nsP4</shortName>
        </alternativeName>
    </component>
</protein>
<accession>P13886</accession>
<organism>
    <name type="scientific">O'nyong-nyong virus (strain Gulu)</name>
    <name type="common">ONNV</name>
    <dbReference type="NCBI Taxonomy" id="11028"/>
    <lineage>
        <taxon>Viruses</taxon>
        <taxon>Riboviria</taxon>
        <taxon>Orthornavirae</taxon>
        <taxon>Kitrinoviricota</taxon>
        <taxon>Alsuviricetes</taxon>
        <taxon>Martellivirales</taxon>
        <taxon>Togaviridae</taxon>
        <taxon>Alphavirus</taxon>
        <taxon>Onyong-nyong virus</taxon>
    </lineage>
</organism>
<organismHost>
    <name type="scientific">Anopheles</name>
    <dbReference type="NCBI Taxonomy" id="44482"/>
</organismHost>
<organismHost>
    <name type="scientific">Homo sapiens</name>
    <name type="common">Human</name>
    <dbReference type="NCBI Taxonomy" id="9606"/>
</organismHost>
<comment type="function">
    <molecule>Polyprotein P1234</molecule>
    <text evidence="6">Inactive precursor of the viral replicase, which is activated by cleavages carried out by the viral protease nsP2.</text>
</comment>
<comment type="function">
    <molecule>Polyprotein P123</molecule>
    <text evidence="2">The early replication complex formed by the polyprotein P123 and nsP4 synthesizes minus-strand RNAs (By similarity). As soon P123 is cleaved into mature proteins, the plus-strand RNAs synthesis begins (By similarity).</text>
</comment>
<comment type="function">
    <molecule>mRNA-capping enzyme nsP1</molecule>
    <text evidence="2 3 4 6 13">Cytoplasmic capping enzyme that catalyzes two virus-specific reactions: methyltransferase and nsP1 guanylyltransferase (By similarity). mRNA-capping is necessary since all viral RNAs are synthesized in the cytoplasm, and host capping enzymes are restricted to the nucleus (Probable). The enzymatic reaction involves a covalent link between 7-methyl-GMP and nsP1, whereas eukaryotic capping enzymes form a covalent complex only with GMP (Probable). nsP1 capping consists in the following reactions: GTP is first methylated into 7-methyl-GMP and then is covalently linked to nsP1 to form the m7GMp-nsP1 complex from which 7-methyl-GMP complex is transferred to the mRNA to create the cap structure (By similarity). NsP1 is also needed for the initiation of the minus-strand RNAs synthesis (By similarity). Probably serves as a membrane anchor for the replication complex composed of nsP1-nsP4 (By similarity). Palmitoylated nsP1 is remodeling host cell cytoskeleton, and induces filopodium-like structure formation at the surface of the host cell (By similarity).</text>
</comment>
<comment type="function">
    <molecule>Protease nsP2</molecule>
    <text evidence="2 3 6">Multifunctional protein whose N-terminus is part of the RNA polymerase complex and displays NTPase, RNA triphosphatase and helicase activities (By similarity). NTPase and RNA triphosphatase are involved in viral RNA capping and helicase keeps a check on the dsRNA replication intermediates (By similarity). The C-terminus harbors a protease that specifically cleaves the polyproteins and releases the mature proteins (By similarity). Required for the shutoff of minus-strand RNAs synthesis (By similarity). Specifically inhibits the host IFN response by promoting the nuclear export of host STAT1 (By similarity). Also inhibits host transcription by inducing the rapid proteasome-dependent degradation of POLR2A, a catalytic subunit of the RNAPII complex (By similarity). The resulting inhibition of cellular protein synthesis serves to ensure maximal viral gene expression and to evade host immune response (By similarity).</text>
</comment>
<comment type="function">
    <molecule>Non-structural protein 3</molecule>
    <text evidence="2 6">Seems to be essential for minus-strand RNAs and subgenomic 26S mRNAs synthesis (By similarity). Displays mono-ADP-ribosylhydrolase activity (By similarity). ADP-ribosylation is a post-translational modification that controls various processes of the host cell and the virus probably needs to revert it for optimal viral replication (By similarity). Binds proteins of G3BP family and sequesters them into the viral RNA replication complexes thereby inhibiting the formation of host stress granules on viral mRNAs (By similarity). The nsp3-G3BP complexes bind viral RNAs and probably orchestrate the assembly of viral replication complexes, thanks to the ability of G3BP family members to self-assemble and bind DNA (By similarity).</text>
</comment>
<comment type="function">
    <molecule>RNA-directed RNA polymerase nsP4</molecule>
    <text evidence="2">RNA dependent RNA polymerase (By similarity). Replicates genomic and antigenomic RNA by recognizing replications specific signals. The early replication complex formed by the polyprotein P123 and nsP4 synthesizes minus-strand RNAs (By similarity). The late replication complex composed of fully processed nsP1-nsP4 is responsible for the production of genomic and subgenomic plus-strand RNAs (By similarity).</text>
</comment>
<comment type="catalytic activity">
    <reaction evidence="4">
        <text>GTP + S-adenosyl-L-methionine = N(7)-methyl-GTP + S-adenosyl-L-homocysteine</text>
        <dbReference type="Rhea" id="RHEA:46948"/>
        <dbReference type="ChEBI" id="CHEBI:37565"/>
        <dbReference type="ChEBI" id="CHEBI:57856"/>
        <dbReference type="ChEBI" id="CHEBI:59789"/>
        <dbReference type="ChEBI" id="CHEBI:87133"/>
    </reaction>
</comment>
<comment type="catalytic activity">
    <reaction evidence="4">
        <text>N(7)-methyl-GTP + L-histidyl-[protein] = N(tele)-(N(7)-methylguanosine 5'-phospho)-L-histidyl-[protein] + diphosphate</text>
        <dbReference type="Rhea" id="RHEA:54792"/>
        <dbReference type="Rhea" id="RHEA-COMP:9745"/>
        <dbReference type="Rhea" id="RHEA-COMP:13995"/>
        <dbReference type="ChEBI" id="CHEBI:29979"/>
        <dbReference type="ChEBI" id="CHEBI:33019"/>
        <dbReference type="ChEBI" id="CHEBI:87133"/>
        <dbReference type="ChEBI" id="CHEBI:138334"/>
    </reaction>
    <physiologicalReaction direction="left-to-right" evidence="4">
        <dbReference type="Rhea" id="RHEA:54793"/>
    </physiologicalReaction>
</comment>
<comment type="catalytic activity">
    <reaction evidence="4">
        <text>N(tele)-(N(7)-methylguanosine 5'-phospho)-L-histidyl-[protein] + a 5'-end diphospho-(purine-ribonucleoside) in mRNA + H(+) = a 5'-end (N(7)-methyl 5'-triphosphoguanosine)-(purine-ribonucleoside) in mRNA + L-histidyl-[protein]</text>
        <dbReference type="Rhea" id="RHEA:54800"/>
        <dbReference type="Rhea" id="RHEA-COMP:9745"/>
        <dbReference type="Rhea" id="RHEA-COMP:12925"/>
        <dbReference type="Rhea" id="RHEA-COMP:13929"/>
        <dbReference type="Rhea" id="RHEA-COMP:13995"/>
        <dbReference type="ChEBI" id="CHEBI:15378"/>
        <dbReference type="ChEBI" id="CHEBI:29979"/>
        <dbReference type="ChEBI" id="CHEBI:133968"/>
        <dbReference type="ChEBI" id="CHEBI:138276"/>
        <dbReference type="ChEBI" id="CHEBI:138334"/>
    </reaction>
</comment>
<comment type="catalytic activity">
    <reaction evidence="3">
        <text>a 5'-end triphospho-ribonucleoside in mRNA + H2O = a 5'-end diphospho-ribonucleoside in mRNA + phosphate + H(+)</text>
        <dbReference type="Rhea" id="RHEA:67004"/>
        <dbReference type="Rhea" id="RHEA-COMP:17164"/>
        <dbReference type="Rhea" id="RHEA-COMP:17165"/>
        <dbReference type="ChEBI" id="CHEBI:15377"/>
        <dbReference type="ChEBI" id="CHEBI:15378"/>
        <dbReference type="ChEBI" id="CHEBI:43474"/>
        <dbReference type="ChEBI" id="CHEBI:167616"/>
        <dbReference type="ChEBI" id="CHEBI:167618"/>
        <dbReference type="EC" id="3.6.1.74"/>
    </reaction>
    <physiologicalReaction direction="left-to-right" evidence="3">
        <dbReference type="Rhea" id="RHEA:67005"/>
    </physiologicalReaction>
</comment>
<comment type="catalytic activity">
    <reaction evidence="6">
        <text>a ribonucleoside 5'-triphosphate + H2O = a ribonucleoside 5'-diphosphate + phosphate + H(+)</text>
        <dbReference type="Rhea" id="RHEA:23680"/>
        <dbReference type="ChEBI" id="CHEBI:15377"/>
        <dbReference type="ChEBI" id="CHEBI:15378"/>
        <dbReference type="ChEBI" id="CHEBI:43474"/>
        <dbReference type="ChEBI" id="CHEBI:57930"/>
        <dbReference type="ChEBI" id="CHEBI:61557"/>
        <dbReference type="EC" id="3.6.1.15"/>
    </reaction>
</comment>
<comment type="catalytic activity">
    <reaction evidence="6">
        <text>ATP + H2O = ADP + phosphate + H(+)</text>
        <dbReference type="Rhea" id="RHEA:13065"/>
        <dbReference type="ChEBI" id="CHEBI:15377"/>
        <dbReference type="ChEBI" id="CHEBI:15378"/>
        <dbReference type="ChEBI" id="CHEBI:30616"/>
        <dbReference type="ChEBI" id="CHEBI:43474"/>
        <dbReference type="ChEBI" id="CHEBI:456216"/>
        <dbReference type="EC" id="3.6.4.13"/>
    </reaction>
</comment>
<comment type="catalytic activity">
    <reaction evidence="8">
        <text>RNA(n) + a ribonucleoside 5'-triphosphate = RNA(n+1) + diphosphate</text>
        <dbReference type="Rhea" id="RHEA:21248"/>
        <dbReference type="Rhea" id="RHEA-COMP:14527"/>
        <dbReference type="Rhea" id="RHEA-COMP:17342"/>
        <dbReference type="ChEBI" id="CHEBI:33019"/>
        <dbReference type="ChEBI" id="CHEBI:61557"/>
        <dbReference type="ChEBI" id="CHEBI:140395"/>
        <dbReference type="EC" id="2.7.7.48"/>
    </reaction>
</comment>
<comment type="catalytic activity">
    <reaction evidence="6">
        <text>4-O-(ADP-D-ribosyl)-L-aspartyl-[protein] + H2O = L-aspartyl-[protein] + ADP-D-ribose + H(+)</text>
        <dbReference type="Rhea" id="RHEA:54428"/>
        <dbReference type="Rhea" id="RHEA-COMP:9867"/>
        <dbReference type="Rhea" id="RHEA-COMP:13832"/>
        <dbReference type="ChEBI" id="CHEBI:15377"/>
        <dbReference type="ChEBI" id="CHEBI:15378"/>
        <dbReference type="ChEBI" id="CHEBI:29961"/>
        <dbReference type="ChEBI" id="CHEBI:57967"/>
        <dbReference type="ChEBI" id="CHEBI:138102"/>
    </reaction>
    <physiologicalReaction direction="left-to-right" evidence="6">
        <dbReference type="Rhea" id="RHEA:54429"/>
    </physiologicalReaction>
</comment>
<comment type="catalytic activity">
    <reaction evidence="6">
        <text>5-O-(ADP-D-ribosyl)-L-glutamyl-[protein] + H2O = L-glutamyl-[protein] + ADP-D-ribose + H(+)</text>
        <dbReference type="Rhea" id="RHEA:58248"/>
        <dbReference type="Rhea" id="RHEA-COMP:10208"/>
        <dbReference type="Rhea" id="RHEA-COMP:15089"/>
        <dbReference type="ChEBI" id="CHEBI:15377"/>
        <dbReference type="ChEBI" id="CHEBI:15378"/>
        <dbReference type="ChEBI" id="CHEBI:29973"/>
        <dbReference type="ChEBI" id="CHEBI:57967"/>
        <dbReference type="ChEBI" id="CHEBI:142540"/>
    </reaction>
    <physiologicalReaction direction="left-to-right" evidence="6">
        <dbReference type="Rhea" id="RHEA:58249"/>
    </physiologicalReaction>
</comment>
<comment type="catalytic activity">
    <reaction evidence="2">
        <text>RNA(n) + ATP = RNA(n)-3'-adenine ribonucleotide + diphosphate</text>
        <dbReference type="Rhea" id="RHEA:11332"/>
        <dbReference type="Rhea" id="RHEA-COMP:14527"/>
        <dbReference type="Rhea" id="RHEA-COMP:17347"/>
        <dbReference type="ChEBI" id="CHEBI:30616"/>
        <dbReference type="ChEBI" id="CHEBI:33019"/>
        <dbReference type="ChEBI" id="CHEBI:140395"/>
        <dbReference type="ChEBI" id="CHEBI:173115"/>
        <dbReference type="EC" id="2.7.7.19"/>
    </reaction>
</comment>
<comment type="catalytic activity">
    <reaction evidence="6">
        <text>ADP-alpha-D-ribose 1''-phosphate + H2O = ADP-D-ribose + phosphate</text>
        <dbReference type="Rhea" id="RHEA:25029"/>
        <dbReference type="ChEBI" id="CHEBI:15377"/>
        <dbReference type="ChEBI" id="CHEBI:43474"/>
        <dbReference type="ChEBI" id="CHEBI:57967"/>
        <dbReference type="ChEBI" id="CHEBI:58753"/>
        <dbReference type="EC" id="3.1.3.84"/>
    </reaction>
    <physiologicalReaction direction="left-to-right" evidence="6">
        <dbReference type="Rhea" id="RHEA:25030"/>
    </physiologicalReaction>
</comment>
<comment type="cofactor">
    <cofactor evidence="2">
        <name>Mg(2+)</name>
        <dbReference type="ChEBI" id="CHEBI:18420"/>
    </cofactor>
    <cofactor evidence="2">
        <name>Mn(2+)</name>
        <dbReference type="ChEBI" id="CHEBI:29035"/>
    </cofactor>
    <text evidence="2">For nsP4 adenylyltransferase activity; Mn(2+) supports catalysis at 60% of the levels observed with Mg(2+).</text>
</comment>
<comment type="cofactor">
    <cofactor>
        <name>Mg(2+)</name>
        <dbReference type="ChEBI" id="CHEBI:18420"/>
    </cofactor>
    <text evidence="2">For nsP4 RNA-directed RNA polymerase activity.</text>
</comment>
<comment type="cofactor">
    <cofactor evidence="4">
        <name>Mg(2+)</name>
        <dbReference type="ChEBI" id="CHEBI:18420"/>
    </cofactor>
    <text evidence="4">For nsP1 guanylylation.</text>
</comment>
<comment type="cofactor">
    <cofactor>
        <name>Mg(2+)</name>
        <dbReference type="ChEBI" id="CHEBI:18420"/>
    </cofactor>
    <text evidence="6">For nsP2 RNA triphosphatase activity.</text>
</comment>
<comment type="cofactor">
    <cofactor>
        <name>Mg(2+)</name>
        <dbReference type="ChEBI" id="CHEBI:18420"/>
    </cofactor>
    <text evidence="6">For nsP2 NTPase activity.</text>
</comment>
<comment type="subunit">
    <molecule>mRNA-capping enzyme nsP1</molecule>
    <text evidence="2 4 6">Interacts with non-structural protein 3 (By similarity). Interacts with RNA-directed RNA polymerase nsP4 (By similarity). Interacts with protease nsP2 (By similarity). interacts with itself (By similarity).</text>
</comment>
<comment type="subunit">
    <molecule>Non-structural protein 3</molecule>
    <text evidence="2 4 6">Interacts with mRNA-capping enzyme nsP1 (By similarity). Interacts with host DDX1 (By similarity). Interacts with host DDX3 (By similarity). Interacts (via C-terminus) with host G3BP1; this interaction inhibits the formation of host stress granules on viral mRNAs and the nsp3-G3BP1 complexes bind viral RNAs and probably orchestrate the assembly of viral replication complexes (By similarity). Interacts (via C-terminus) with host G3BP2; this interaction inhibits the formation of host stress granules on viral mRNAs and the nsp3-G3BP2 complexes bind viral RNAs and probably orchestrate the assembly of viral replication complexes (By similarity).</text>
</comment>
<comment type="subunit">
    <molecule>RNA-directed RNA polymerase nsP4</molecule>
    <text evidence="1">Interacts with mRNA-capping enzyme nsP1 (By similarity). Interacts with protease nsP2 (By similarity). interacts with itself (By similarity).</text>
</comment>
<comment type="subunit">
    <molecule>Protease nsP2</molecule>
    <text evidence="2 4 6">Interacts with RNA-directed RNA polymerase nsP4 (By similarity). Interacts with mRNA-capping enzyme nsP1 (By similarity). Interacts with KPNA1/karyopherin-alpha1; this interaction probably allows the active transport of protease nsP2 into the host nucleus (By similarity).</text>
</comment>
<comment type="subcellular location">
    <molecule>Polyprotein P1234</molecule>
    <subcellularLocation>
        <location evidence="13">Host cytoplasmic vesicle membrane</location>
        <topology evidence="13">Peripheral membrane protein</topology>
    </subcellularLocation>
    <text evidence="13">Part of cytoplasmic vesicles, which are probably formed at the plasma membrane and internalized leading to late endosomal/lysosomal spherules containing the replication complex.</text>
</comment>
<comment type="subcellular location">
    <molecule>Polyprotein P123</molecule>
    <subcellularLocation>
        <location evidence="13">Host cytoplasmic vesicle membrane</location>
        <topology evidence="13">Peripheral membrane protein</topology>
    </subcellularLocation>
    <text evidence="13">Part of cytoplasmic vesicles, which are probably formed at the plasma membrane and internalized leading to late endosomal/lysosomal spherules containing the replication complex.</text>
</comment>
<comment type="subcellular location">
    <molecule>mRNA-capping enzyme nsP1</molecule>
    <subcellularLocation>
        <location evidence="3">Host cytoplasmic vesicle membrane</location>
        <topology evidence="3">Lipid-anchor</topology>
    </subcellularLocation>
    <subcellularLocation>
        <location evidence="3">Host cell membrane</location>
        <topology evidence="3">Lipid-anchor</topology>
        <orientation evidence="3">Cytoplasmic side</orientation>
    </subcellularLocation>
    <subcellularLocation>
        <location evidence="6">Host cell projection</location>
        <location evidence="6">Host filopodium</location>
    </subcellularLocation>
    <text evidence="3 6">In the late phase of infection, the polyprotein is quickly cleaved before localization to cellular membranes. Then a fraction of nsP1 localizes to the inner surface of the plasma membrane and its filopodial extensions. Only the palmitoylated nsP1 localizes to the host filopodia (By similarity). NsP1 is also part of cytoplasmic vesicles, which are probably formed at the plasma membrane and internalized leading to late endosomal/lysosomal spherules containing the replication complex (By similarity).</text>
</comment>
<comment type="subcellular location">
    <molecule>Protease nsP2</molecule>
    <subcellularLocation>
        <location evidence="3">Host cytoplasmic vesicle membrane</location>
        <topology evidence="3">Peripheral membrane protein</topology>
    </subcellularLocation>
    <subcellularLocation>
        <location evidence="4">Host nucleus</location>
    </subcellularLocation>
    <subcellularLocation>
        <location evidence="4">Host cytoplasm</location>
    </subcellularLocation>
    <text evidence="3 4">In the late phase of infection, the polyprotein is quickly cleaved before localization to cellular membranes. Then approximately half of nsP2 is found in the nucleus (By similarity). Shuttles between cytoplasm and nucleus (By similarity). NsP2 is also part of cytoplasmic vesicles, which are probably formed at the plasma membrane and internalized leading to late endosomal/lysosomal spherules containing the replication complex (By similarity).</text>
</comment>
<comment type="subcellular location">
    <molecule>Non-structural protein 3</molecule>
    <subcellularLocation>
        <location evidence="2">Host cytoplasmic vesicle membrane</location>
        <topology evidence="13">Peripheral membrane protein</topology>
    </subcellularLocation>
    <text evidence="2">In the late phase of infection, the polyprotein is quickly cleaved before localization to cellular membranes. Then nsP3 forms aggregates in cytoplasm (By similarity). NsP3 is also part of cytoplasmic vesicles, which are probably formed at the plasma membrane and internalized leading to late endosomal/lysosomal spherules containing the replication complex (By similarity).</text>
</comment>
<comment type="subcellular location">
    <molecule>RNA-directed RNA polymerase nsP4</molecule>
    <subcellularLocation>
        <location>Host cytoplasmic vesicle membrane</location>
        <topology evidence="3">Peripheral membrane protein</topology>
    </subcellularLocation>
    <text evidence="3">NsP4 is part of cytoplasmic vesicles, which are probably formed at the plasma membrane and internalized leading to late endosomal/lysosomal spherules containing the replication complex.</text>
</comment>
<comment type="domain">
    <molecule>Protease nsP2</molecule>
    <text evidence="4 6">The N-terminus exhibits NTPase and RNA triphosphatase activities and is proposed to have helicase activity, whereas the C-terminus possesses protease activity (By similarity). Contains a nuclear localization signal and a nuclear export signal, these two motifs are probably involved in the shuttling between the cytoplasm and the nucleus of nsP2 (By similarity). The C-terminus is required for promoting the export of host STAT1 (By similarity).</text>
</comment>
<comment type="domain">
    <molecule>Non-structural protein 3</molecule>
    <text evidence="2 6">In the N-terminus, the macro domain displays a mono-ADP-ribosylhydrolase activity (By similarity). The central part has a zinc-binding function (By similarity). The C-terminus contains two FGDF motifs necessary and sufficient for formation of the nsP3/G3BP1 complex (By similarity).</text>
</comment>
<comment type="PTM">
    <molecule>Polyprotein P1234</molecule>
    <text evidence="2">Specific enzymatic cleavages in vivo yield mature proteins (By similarity). The processing of the polyprotein is temporally regulated (By similarity). In early stages (1.7 hpi), P1234 is first cleaved in trans through its nsP2 protease activity, releasing P123 and nsP4, which associate to form the early replication complex (By similarity). At the same time, P1234 is also cut at the nsP1/nsP2 site early in infection but with lower efficiency (By similarity). After replication of the viral minus-strand RNAs (4 hpi), the polyproteins are cut at the nsP1/nsP2 and nsP2/nsP3 sites very efficiently, preventing accumulation of P123 and P1234 and allowing the formation of the late replication complex (By similarity). NsP3/nsP4 site is not cleaved anymore and P34 is produced rather than nsP4 (By similarity).</text>
</comment>
<comment type="PTM">
    <molecule>Polyprotein P123</molecule>
    <text evidence="2">Specific enzymatic cleavages in vivo yield mature proteins (By similarity). The processing of the polyprotein is temporally regulated (By similarity). In early stages (1.7 hpi), P123 is cleaved at the nsP1/nsP2 site with low efficiency (By similarity). After replication of the viral minus-strand RNAs (4 hpi), the polyproteins are cut at the nsP1/nsP2 and nsP2/nsP3 sites very efficiently, preventing accumulation of P123 and allowing the formation of the late replication complex (By similarity).</text>
</comment>
<comment type="PTM">
    <molecule>mRNA-capping enzyme nsP1</molecule>
    <text evidence="6">Palmitoylated by host palmitoyltransferases ZDHHC2 and ZDHHC19.</text>
</comment>
<comment type="PTM">
    <molecule>Non-structural protein 3</molecule>
    <text evidence="3">Phosphorylated by host on serines and threonines.</text>
</comment>
<comment type="PTM">
    <molecule>RNA-directed RNA polymerase nsP4</molecule>
    <text evidence="2">Ubiquitinated; targets the protein for rapid degradation via the ubiquitin system (By similarity). Nsp4 is present in extremely low quantities due to low frequency of translation through the amber stop-codon and the degradation by the ubiquitin pathway (By similarity).</text>
</comment>
<comment type="miscellaneous">
    <text evidence="2">Viral replication produces dsRNA in the late phase of infection, resulting in a strong activation of host EIF2AK2/PKR, leading to almost complete phosphorylation of EIF2A (By similarity). This inactivates completely cellular translation initiation, resulting shutoff of host proteins synthesis (By similarity). However, phosphorylation of EIF2A is probably not the only mechanism responsible for the host translation shutoff (By similarity). The viral translation can still occur normally because it relies on a hairpin structure in the coding region of sgRNA and is EIF2A-, EIF2D-, EIF4G- EIF4A-independent (By similarity).</text>
</comment>
<comment type="caution">
    <text evidence="12">There is no stop codon readthrough before nsP4 like in other ONNV strains (PubMed:9875334). The opal termination codon has probably been mutated to a sense codon on passage in cell culture (PubMed:9875334). The presence of the opal codon may be a requirement for viral maintenance in both vertebrate and invertebrate hosts and a selective advantage may be conferred in cell culture for the sense codon (PubMed:9875334).</text>
</comment>
<proteinExistence type="inferred from homology"/>
<reference key="1">
    <citation type="journal article" date="1990" name="Virology">
        <title>Complete sequence of the genomic RNA of O'nyong-nyong virus and its use in the construction of alphavirus phylogenetic trees.</title>
        <authorList>
            <person name="Levinson R.S."/>
            <person name="Strauss J.H."/>
            <person name="Strauss E.G."/>
        </authorList>
    </citation>
    <scope>NUCLEOTIDE SEQUENCE [GENOMIC RNA]</scope>
</reference>
<reference key="2">
    <citation type="journal article" date="1988" name="Virology">
        <title>Nonstructural proteins nsP3 and nsP4 of Ross River and O'Nyong-nyong viruses: sequence and comparison with those of other alphaviruses.</title>
        <authorList>
            <person name="Strauss E.G."/>
            <person name="Levinson R."/>
            <person name="Rice C.M."/>
            <person name="Dalrymple J."/>
            <person name="Strauss J.H."/>
        </authorList>
    </citation>
    <scope>NUCLEOTIDE SEQUENCE [GENOMIC RNA] OF 1334-2514</scope>
</reference>
<reference key="3">
    <citation type="journal article" date="1998" name="Virology">
        <title>Emergence of epidemic O'nyong-nyong fever in Uganda after a 35-year absence: genetic characterization of the virus.</title>
        <authorList>
            <person name="Lanciotti R.S."/>
            <person name="Ludwig M.L."/>
            <person name="Rwaguma E.B."/>
            <person name="Lutwama J.J."/>
            <person name="Kram T.M."/>
            <person name="Karabatsos N."/>
            <person name="Cropp B.C."/>
            <person name="Miller B.R."/>
        </authorList>
    </citation>
    <scope>ABSENCE OF READTHROUGH</scope>
</reference>
<keyword id="KW-0067">ATP-binding</keyword>
<keyword id="KW-1262">Eukaryotic host gene expression shutoff by virus</keyword>
<keyword id="KW-1191">Eukaryotic host transcription shutoff by virus</keyword>
<keyword id="KW-0342">GTP-binding</keyword>
<keyword id="KW-0347">Helicase</keyword>
<keyword id="KW-1032">Host cell membrane</keyword>
<keyword id="KW-1034">Host cell projection</keyword>
<keyword id="KW-1035">Host cytoplasm</keyword>
<keyword id="KW-1036">Host cytoplasmic vesicle</keyword>
<keyword id="KW-1190">Host gene expression shutoff by virus</keyword>
<keyword id="KW-1043">Host membrane</keyword>
<keyword id="KW-1048">Host nucleus</keyword>
<keyword id="KW-0945">Host-virus interaction</keyword>
<keyword id="KW-0378">Hydrolase</keyword>
<keyword id="KW-1104">Inhibition of host RNA polymerase II by virus</keyword>
<keyword id="KW-0449">Lipoprotein</keyword>
<keyword id="KW-0472">Membrane</keyword>
<keyword id="KW-0479">Metal-binding</keyword>
<keyword id="KW-0489">Methyltransferase</keyword>
<keyword id="KW-0506">mRNA capping</keyword>
<keyword id="KW-0507">mRNA processing</keyword>
<keyword id="KW-0511">Multifunctional enzyme</keyword>
<keyword id="KW-0547">Nucleotide-binding</keyword>
<keyword id="KW-0548">Nucleotidyltransferase</keyword>
<keyword id="KW-0564">Palmitate</keyword>
<keyword id="KW-0597">Phosphoprotein</keyword>
<keyword id="KW-0645">Protease</keyword>
<keyword id="KW-1159">RNA suppression of termination</keyword>
<keyword id="KW-0694">RNA-binding</keyword>
<keyword id="KW-0696">RNA-directed RNA polymerase</keyword>
<keyword id="KW-0949">S-adenosyl-L-methionine</keyword>
<keyword id="KW-0788">Thiol protease</keyword>
<keyword id="KW-0808">Transferase</keyword>
<keyword id="KW-0832">Ubl conjugation</keyword>
<keyword id="KW-0693">Viral RNA replication</keyword>
<keyword id="KW-0862">Zinc</keyword>
<dbReference type="EC" id="2.1.1.-" evidence="4"/>
<dbReference type="EC" id="2.7.7.-" evidence="4"/>
<dbReference type="EC" id="3.4.22.-" evidence="6"/>
<dbReference type="EC" id="3.6.1.15" evidence="6"/>
<dbReference type="EC" id="3.6.1.74" evidence="3"/>
<dbReference type="EC" id="3.6.4.13" evidence="6"/>
<dbReference type="EC" id="3.1.3.84" evidence="6"/>
<dbReference type="EC" id="2.7.7.19" evidence="2"/>
<dbReference type="EC" id="2.7.7.48" evidence="8"/>
<dbReference type="EMBL" id="M20303">
    <property type="protein sequence ID" value="AAA46784.1"/>
    <property type="molecule type" value="Genomic_RNA"/>
</dbReference>
<dbReference type="PIR" id="A34680">
    <property type="entry name" value="MNWVN2"/>
</dbReference>
<dbReference type="SMR" id="P13886"/>
<dbReference type="IntAct" id="P13886">
    <property type="interactions" value="3"/>
</dbReference>
<dbReference type="MEROPS" id="C09.001"/>
<dbReference type="KEGG" id="vg:1502145"/>
<dbReference type="Proteomes" id="UP000008868">
    <property type="component" value="Segment"/>
</dbReference>
<dbReference type="GO" id="GO:0044162">
    <property type="term" value="C:host cell cytoplasmic vesicle membrane"/>
    <property type="evidence" value="ECO:0007669"/>
    <property type="project" value="UniProtKB-SubCell"/>
</dbReference>
<dbReference type="GO" id="GO:0044176">
    <property type="term" value="C:host cell filopodium"/>
    <property type="evidence" value="ECO:0007669"/>
    <property type="project" value="UniProtKB-SubCell"/>
</dbReference>
<dbReference type="GO" id="GO:0042025">
    <property type="term" value="C:host cell nucleus"/>
    <property type="evidence" value="ECO:0007669"/>
    <property type="project" value="UniProtKB-SubCell"/>
</dbReference>
<dbReference type="GO" id="GO:0020002">
    <property type="term" value="C:host cell plasma membrane"/>
    <property type="evidence" value="ECO:0007669"/>
    <property type="project" value="UniProtKB-SubCell"/>
</dbReference>
<dbReference type="GO" id="GO:0016020">
    <property type="term" value="C:membrane"/>
    <property type="evidence" value="ECO:0007669"/>
    <property type="project" value="UniProtKB-KW"/>
</dbReference>
<dbReference type="GO" id="GO:0005524">
    <property type="term" value="F:ATP binding"/>
    <property type="evidence" value="ECO:0007669"/>
    <property type="project" value="UniProtKB-KW"/>
</dbReference>
<dbReference type="GO" id="GO:0016887">
    <property type="term" value="F:ATP hydrolysis activity"/>
    <property type="evidence" value="ECO:0007669"/>
    <property type="project" value="RHEA"/>
</dbReference>
<dbReference type="GO" id="GO:0008234">
    <property type="term" value="F:cysteine-type peptidase activity"/>
    <property type="evidence" value="ECO:0007669"/>
    <property type="project" value="UniProtKB-KW"/>
</dbReference>
<dbReference type="GO" id="GO:0005525">
    <property type="term" value="F:GTP binding"/>
    <property type="evidence" value="ECO:0007669"/>
    <property type="project" value="UniProtKB-KW"/>
</dbReference>
<dbReference type="GO" id="GO:0046872">
    <property type="term" value="F:metal ion binding"/>
    <property type="evidence" value="ECO:0007669"/>
    <property type="project" value="UniProtKB-KW"/>
</dbReference>
<dbReference type="GO" id="GO:0140818">
    <property type="term" value="F:mRNA 5'-triphosphate monophosphatase activity"/>
    <property type="evidence" value="ECO:0007669"/>
    <property type="project" value="RHEA"/>
</dbReference>
<dbReference type="GO" id="GO:0008174">
    <property type="term" value="F:mRNA methyltransferase activity"/>
    <property type="evidence" value="ECO:0007669"/>
    <property type="project" value="InterPro"/>
</dbReference>
<dbReference type="GO" id="GO:1990817">
    <property type="term" value="F:poly(A) RNA polymerase activity"/>
    <property type="evidence" value="ECO:0007669"/>
    <property type="project" value="UniProtKB-EC"/>
</dbReference>
<dbReference type="GO" id="GO:0004651">
    <property type="term" value="F:polynucleotide 5'-phosphatase activity"/>
    <property type="evidence" value="ECO:0007669"/>
    <property type="project" value="UniProtKB-EC"/>
</dbReference>
<dbReference type="GO" id="GO:0003723">
    <property type="term" value="F:RNA binding"/>
    <property type="evidence" value="ECO:0007669"/>
    <property type="project" value="UniProtKB-KW"/>
</dbReference>
<dbReference type="GO" id="GO:0003724">
    <property type="term" value="F:RNA helicase activity"/>
    <property type="evidence" value="ECO:0007669"/>
    <property type="project" value="UniProtKB-EC"/>
</dbReference>
<dbReference type="GO" id="GO:0003968">
    <property type="term" value="F:RNA-directed RNA polymerase activity"/>
    <property type="evidence" value="ECO:0007669"/>
    <property type="project" value="UniProtKB-KW"/>
</dbReference>
<dbReference type="GO" id="GO:0006370">
    <property type="term" value="P:7-methylguanosine mRNA capping"/>
    <property type="evidence" value="ECO:0007669"/>
    <property type="project" value="UniProtKB-KW"/>
</dbReference>
<dbReference type="GO" id="GO:0006351">
    <property type="term" value="P:DNA-templated transcription"/>
    <property type="evidence" value="ECO:0007669"/>
    <property type="project" value="InterPro"/>
</dbReference>
<dbReference type="GO" id="GO:0032259">
    <property type="term" value="P:methylation"/>
    <property type="evidence" value="ECO:0007669"/>
    <property type="project" value="UniProtKB-KW"/>
</dbReference>
<dbReference type="GO" id="GO:0016556">
    <property type="term" value="P:mRNA modification"/>
    <property type="evidence" value="ECO:0007669"/>
    <property type="project" value="InterPro"/>
</dbReference>
<dbReference type="GO" id="GO:0006508">
    <property type="term" value="P:proteolysis"/>
    <property type="evidence" value="ECO:0007669"/>
    <property type="project" value="UniProtKB-KW"/>
</dbReference>
<dbReference type="GO" id="GO:0039657">
    <property type="term" value="P:symbiont-mediated suppression of host gene expression"/>
    <property type="evidence" value="ECO:0007669"/>
    <property type="project" value="UniProtKB-KW"/>
</dbReference>
<dbReference type="GO" id="GO:0039523">
    <property type="term" value="P:symbiont-mediated suppression of host mRNA transcription via inhibition of RNA polymerase II activity"/>
    <property type="evidence" value="ECO:0007669"/>
    <property type="project" value="UniProtKB-KW"/>
</dbReference>
<dbReference type="GO" id="GO:0039694">
    <property type="term" value="P:viral RNA genome replication"/>
    <property type="evidence" value="ECO:0007669"/>
    <property type="project" value="InterPro"/>
</dbReference>
<dbReference type="CDD" id="cd21557">
    <property type="entry name" value="Macro_X_Nsp3-like"/>
    <property type="match status" value="1"/>
</dbReference>
<dbReference type="CDD" id="cd23250">
    <property type="entry name" value="Togaviridae_RdRp"/>
    <property type="match status" value="1"/>
</dbReference>
<dbReference type="FunFam" id="3.40.220.10:FF:000015">
    <property type="entry name" value="Polyprotein P1234"/>
    <property type="match status" value="1"/>
</dbReference>
<dbReference type="FunFam" id="3.40.50.150:FF:000323">
    <property type="entry name" value="Polyprotein P1234"/>
    <property type="match status" value="1"/>
</dbReference>
<dbReference type="FunFam" id="3.40.50.300:FF:001415">
    <property type="entry name" value="Polyprotein P1234"/>
    <property type="match status" value="1"/>
</dbReference>
<dbReference type="Gene3D" id="3.90.70.110">
    <property type="entry name" value="Alphavirus nsP2 protease domain"/>
    <property type="match status" value="1"/>
</dbReference>
<dbReference type="Gene3D" id="3.40.220.10">
    <property type="entry name" value="Leucine Aminopeptidase, subunit E, domain 1"/>
    <property type="match status" value="1"/>
</dbReference>
<dbReference type="Gene3D" id="3.40.50.300">
    <property type="entry name" value="P-loop containing nucleotide triphosphate hydrolases"/>
    <property type="match status" value="2"/>
</dbReference>
<dbReference type="Gene3D" id="3.40.50.150">
    <property type="entry name" value="Vaccinia Virus protein VP39"/>
    <property type="match status" value="1"/>
</dbReference>
<dbReference type="InterPro" id="IPR027351">
    <property type="entry name" value="(+)RNA_virus_helicase_core_dom"/>
</dbReference>
<dbReference type="InterPro" id="IPR002588">
    <property type="entry name" value="Alphavirus-like_MT_dom"/>
</dbReference>
<dbReference type="InterPro" id="IPR002620">
    <property type="entry name" value="Alphavirus_nsp2pro"/>
</dbReference>
<dbReference type="InterPro" id="IPR044936">
    <property type="entry name" value="Alphavirus_nsp2pro_sf"/>
</dbReference>
<dbReference type="InterPro" id="IPR043502">
    <property type="entry name" value="DNA/RNA_pol_sf"/>
</dbReference>
<dbReference type="InterPro" id="IPR002589">
    <property type="entry name" value="Macro_dom"/>
</dbReference>
<dbReference type="InterPro" id="IPR043472">
    <property type="entry name" value="Macro_dom-like"/>
</dbReference>
<dbReference type="InterPro" id="IPR044371">
    <property type="entry name" value="Macro_X_NSP3-like"/>
</dbReference>
<dbReference type="InterPro" id="IPR048891">
    <property type="entry name" value="nsP3_ZBD"/>
</dbReference>
<dbReference type="InterPro" id="IPR027417">
    <property type="entry name" value="P-loop_NTPase"/>
</dbReference>
<dbReference type="InterPro" id="IPR001788">
    <property type="entry name" value="RNA-dep_RNA_pol_alsuvir"/>
</dbReference>
<dbReference type="InterPro" id="IPR007094">
    <property type="entry name" value="RNA-dir_pol_PSvirus"/>
</dbReference>
<dbReference type="InterPro" id="IPR029063">
    <property type="entry name" value="SAM-dependent_MTases_sf"/>
</dbReference>
<dbReference type="InterPro" id="IPR047311">
    <property type="entry name" value="Togaviridae_RdRp"/>
</dbReference>
<dbReference type="InterPro" id="IPR049329">
    <property type="entry name" value="ToMV_Hel_N"/>
</dbReference>
<dbReference type="Pfam" id="PF01661">
    <property type="entry name" value="Macro"/>
    <property type="match status" value="1"/>
</dbReference>
<dbReference type="Pfam" id="PF20852">
    <property type="entry name" value="nsP3_ZBD"/>
    <property type="match status" value="1"/>
</dbReference>
<dbReference type="Pfam" id="PF01707">
    <property type="entry name" value="Peptidase_C9"/>
    <property type="match status" value="1"/>
</dbReference>
<dbReference type="Pfam" id="PF00978">
    <property type="entry name" value="RdRP_2"/>
    <property type="match status" value="1"/>
</dbReference>
<dbReference type="Pfam" id="PF20896">
    <property type="entry name" value="ToMV_Hel_N"/>
    <property type="match status" value="1"/>
</dbReference>
<dbReference type="Pfam" id="PF01443">
    <property type="entry name" value="Viral_helicase1"/>
    <property type="match status" value="1"/>
</dbReference>
<dbReference type="Pfam" id="PF01660">
    <property type="entry name" value="Vmethyltransf"/>
    <property type="match status" value="1"/>
</dbReference>
<dbReference type="SMART" id="SM00506">
    <property type="entry name" value="A1pp"/>
    <property type="match status" value="1"/>
</dbReference>
<dbReference type="SUPFAM" id="SSF56672">
    <property type="entry name" value="DNA/RNA polymerases"/>
    <property type="match status" value="1"/>
</dbReference>
<dbReference type="SUPFAM" id="SSF52949">
    <property type="entry name" value="Macro domain-like"/>
    <property type="match status" value="1"/>
</dbReference>
<dbReference type="SUPFAM" id="SSF52540">
    <property type="entry name" value="P-loop containing nucleoside triphosphate hydrolases"/>
    <property type="match status" value="1"/>
</dbReference>
<dbReference type="PROSITE" id="PS51743">
    <property type="entry name" value="ALPHAVIRUS_MT"/>
    <property type="match status" value="1"/>
</dbReference>
<dbReference type="PROSITE" id="PS51154">
    <property type="entry name" value="MACRO"/>
    <property type="match status" value="1"/>
</dbReference>
<dbReference type="PROSITE" id="PS51520">
    <property type="entry name" value="NSP2PRO"/>
    <property type="match status" value="1"/>
</dbReference>
<dbReference type="PROSITE" id="PS51657">
    <property type="entry name" value="PSRV_HELICASE"/>
    <property type="match status" value="1"/>
</dbReference>
<dbReference type="PROSITE" id="PS50507">
    <property type="entry name" value="RDRP_SSRNA_POS"/>
    <property type="match status" value="1"/>
</dbReference>
<evidence type="ECO:0000250" key="1"/>
<evidence type="ECO:0000250" key="2">
    <source>
        <dbReference type="UniProtKB" id="P03317"/>
    </source>
</evidence>
<evidence type="ECO:0000250" key="3">
    <source>
        <dbReference type="UniProtKB" id="P08411"/>
    </source>
</evidence>
<evidence type="ECO:0000250" key="4">
    <source>
        <dbReference type="UniProtKB" id="P27282"/>
    </source>
</evidence>
<evidence type="ECO:0000250" key="5">
    <source>
        <dbReference type="UniProtKB" id="P36328"/>
    </source>
</evidence>
<evidence type="ECO:0000250" key="6">
    <source>
        <dbReference type="UniProtKB" id="Q8JUX6"/>
    </source>
</evidence>
<evidence type="ECO:0000255" key="7">
    <source>
        <dbReference type="PROSITE-ProRule" id="PRU00490"/>
    </source>
</evidence>
<evidence type="ECO:0000255" key="8">
    <source>
        <dbReference type="PROSITE-ProRule" id="PRU00539"/>
    </source>
</evidence>
<evidence type="ECO:0000255" key="9">
    <source>
        <dbReference type="PROSITE-ProRule" id="PRU00853"/>
    </source>
</evidence>
<evidence type="ECO:0000255" key="10">
    <source>
        <dbReference type="PROSITE-ProRule" id="PRU00990"/>
    </source>
</evidence>
<evidence type="ECO:0000255" key="11">
    <source>
        <dbReference type="PROSITE-ProRule" id="PRU01079"/>
    </source>
</evidence>
<evidence type="ECO:0000269" key="12">
    <source>
    </source>
</evidence>
<evidence type="ECO:0000305" key="13"/>
<name>POLN_ONNVG</name>